<dbReference type="EC" id="3.6.4.-" evidence="1"/>
<dbReference type="EMBL" id="M20310">
    <property type="protein sequence ID" value="AAA30151.1"/>
    <property type="molecule type" value="Genomic_DNA"/>
</dbReference>
<dbReference type="SMR" id="P12432"/>
<dbReference type="GO" id="GO:0097014">
    <property type="term" value="C:ciliary plasm"/>
    <property type="evidence" value="ECO:0000314"/>
    <property type="project" value="GeneDB"/>
</dbReference>
<dbReference type="GO" id="GO:0005737">
    <property type="term" value="C:cytoplasm"/>
    <property type="evidence" value="ECO:0000314"/>
    <property type="project" value="GeneDB"/>
</dbReference>
<dbReference type="GO" id="GO:0005856">
    <property type="term" value="C:cytoskeleton"/>
    <property type="evidence" value="ECO:0007669"/>
    <property type="project" value="UniProtKB-SubCell"/>
</dbReference>
<dbReference type="GO" id="GO:0005524">
    <property type="term" value="F:ATP binding"/>
    <property type="evidence" value="ECO:0007669"/>
    <property type="project" value="UniProtKB-KW"/>
</dbReference>
<dbReference type="GO" id="GO:0016787">
    <property type="term" value="F:hydrolase activity"/>
    <property type="evidence" value="ECO:0007669"/>
    <property type="project" value="UniProtKB-KW"/>
</dbReference>
<dbReference type="FunFam" id="3.90.640.10:FF:000007">
    <property type="entry name" value="Actin like 7B"/>
    <property type="match status" value="1"/>
</dbReference>
<dbReference type="FunFam" id="3.30.420.40:FF:000205">
    <property type="entry name" value="Actin, alpha skeletal muscle"/>
    <property type="match status" value="1"/>
</dbReference>
<dbReference type="FunFam" id="3.30.420.40:FF:000018">
    <property type="entry name" value="Actin-like protein (Centractin)"/>
    <property type="match status" value="1"/>
</dbReference>
<dbReference type="FunFam" id="3.30.420.40:FF:000058">
    <property type="entry name" value="Putative actin-related protein 5"/>
    <property type="match status" value="1"/>
</dbReference>
<dbReference type="Gene3D" id="3.30.420.40">
    <property type="match status" value="2"/>
</dbReference>
<dbReference type="Gene3D" id="3.90.640.10">
    <property type="entry name" value="Actin, Chain A, domain 4"/>
    <property type="match status" value="1"/>
</dbReference>
<dbReference type="InterPro" id="IPR004000">
    <property type="entry name" value="Actin"/>
</dbReference>
<dbReference type="InterPro" id="IPR020902">
    <property type="entry name" value="Actin/actin-like_CS"/>
</dbReference>
<dbReference type="InterPro" id="IPR004001">
    <property type="entry name" value="Actin_CS"/>
</dbReference>
<dbReference type="InterPro" id="IPR043129">
    <property type="entry name" value="ATPase_NBD"/>
</dbReference>
<dbReference type="PANTHER" id="PTHR11937">
    <property type="entry name" value="ACTIN"/>
    <property type="match status" value="1"/>
</dbReference>
<dbReference type="Pfam" id="PF00022">
    <property type="entry name" value="Actin"/>
    <property type="match status" value="1"/>
</dbReference>
<dbReference type="PRINTS" id="PR00190">
    <property type="entry name" value="ACTIN"/>
</dbReference>
<dbReference type="SMART" id="SM00268">
    <property type="entry name" value="ACTIN"/>
    <property type="match status" value="1"/>
</dbReference>
<dbReference type="SUPFAM" id="SSF53067">
    <property type="entry name" value="Actin-like ATPase domain"/>
    <property type="match status" value="2"/>
</dbReference>
<dbReference type="PROSITE" id="PS00406">
    <property type="entry name" value="ACTINS_1"/>
    <property type="match status" value="1"/>
</dbReference>
<dbReference type="PROSITE" id="PS00432">
    <property type="entry name" value="ACTINS_2"/>
    <property type="match status" value="1"/>
</dbReference>
<dbReference type="PROSITE" id="PS01132">
    <property type="entry name" value="ACTINS_ACT_LIKE"/>
    <property type="match status" value="1"/>
</dbReference>
<protein>
    <recommendedName>
        <fullName>Actin A</fullName>
        <ecNumber evidence="1">3.6.4.-</ecNumber>
    </recommendedName>
</protein>
<reference key="1">
    <citation type="journal article" date="1988" name="Mol. Cell. Biol.">
        <title>Structure and transcription of the actin gene of Trypanosoma brucei.</title>
        <authorList>
            <person name="Ben-Amar M.F."/>
            <person name="Pays A."/>
            <person name="Tebabi P."/>
            <person name="Dero B."/>
            <person name="Seebeck T."/>
            <person name="Steinert M."/>
            <person name="Pays E."/>
        </authorList>
    </citation>
    <scope>NUCLEOTIDE SEQUENCE [GENOMIC DNA]</scope>
</reference>
<comment type="function">
    <text>Actins are highly conserved proteins that are involved in various types of cell motility and are ubiquitously expressed in all eukaryotic cells.</text>
</comment>
<comment type="catalytic activity">
    <reaction evidence="1">
        <text>ATP + H2O = ADP + phosphate + H(+)</text>
        <dbReference type="Rhea" id="RHEA:13065"/>
        <dbReference type="ChEBI" id="CHEBI:15377"/>
        <dbReference type="ChEBI" id="CHEBI:15378"/>
        <dbReference type="ChEBI" id="CHEBI:30616"/>
        <dbReference type="ChEBI" id="CHEBI:43474"/>
        <dbReference type="ChEBI" id="CHEBI:456216"/>
    </reaction>
</comment>
<comment type="subcellular location">
    <subcellularLocation>
        <location>Cytoplasm</location>
        <location>Cytoskeleton</location>
    </subcellularLocation>
</comment>
<comment type="similarity">
    <text evidence="2">Belongs to the actin family.</text>
</comment>
<keyword id="KW-0067">ATP-binding</keyword>
<keyword id="KW-0963">Cytoplasm</keyword>
<keyword id="KW-0206">Cytoskeleton</keyword>
<keyword id="KW-0378">Hydrolase</keyword>
<keyword id="KW-0547">Nucleotide-binding</keyword>
<organism>
    <name type="scientific">Trypanosoma brucei brucei</name>
    <dbReference type="NCBI Taxonomy" id="5702"/>
    <lineage>
        <taxon>Eukaryota</taxon>
        <taxon>Discoba</taxon>
        <taxon>Euglenozoa</taxon>
        <taxon>Kinetoplastea</taxon>
        <taxon>Metakinetoplastina</taxon>
        <taxon>Trypanosomatida</taxon>
        <taxon>Trypanosomatidae</taxon>
        <taxon>Trypanosoma</taxon>
    </lineage>
</organism>
<evidence type="ECO:0000250" key="1">
    <source>
        <dbReference type="UniProtKB" id="Q8I4X0"/>
    </source>
</evidence>
<evidence type="ECO:0000305" key="2"/>
<sequence>MSDEEQTAIVCDNGSGMVKSGFSGDDAPRHVFPSIVGRPKNEQAMMGSANKKLFVGDEAQAKRGVLALKYPIEHGIVTNWDDMEKVWHHTFYNELRVNPESHNVLLTEAPMNPKQNREKMTQIMFETFGVPAMYVGIQAVLSLYSSGRTTGIVLDAGDGVTHTVPIYEGYSLPHAIRRVDMAGRDLTEYLMKILMHTGMTFTTSAEKEIVRNIKEQLCYVALDFDEEMTNSAKSVSEEPFELPDGNVMQVGNQRFRCPEALFKPALIGLDEAPGFHEMTFQSINKCDIDVRRDLYGNIVLSGGTTMFKNLPERLAKEISNLPPSSIKPKVVAPPERKYSVWIGGSILSSLTTFQSMWITKSEYDESGPSIVHSKCF</sequence>
<name>ACT1_TRYBB</name>
<proteinExistence type="inferred from homology"/>
<feature type="chain" id="PRO_0000089046" description="Actin A">
    <location>
        <begin position="1"/>
        <end position="376"/>
    </location>
</feature>
<accession>P12432</accession>